<organism>
    <name type="scientific">Salmonella heidelberg (strain SL476)</name>
    <dbReference type="NCBI Taxonomy" id="454169"/>
    <lineage>
        <taxon>Bacteria</taxon>
        <taxon>Pseudomonadati</taxon>
        <taxon>Pseudomonadota</taxon>
        <taxon>Gammaproteobacteria</taxon>
        <taxon>Enterobacterales</taxon>
        <taxon>Enterobacteriaceae</taxon>
        <taxon>Salmonella</taxon>
    </lineage>
</organism>
<comment type="similarity">
    <text evidence="1">Belongs to the bacterial ribosomal protein bL36 family.</text>
</comment>
<evidence type="ECO:0000255" key="1">
    <source>
        <dbReference type="HAMAP-Rule" id="MF_00251"/>
    </source>
</evidence>
<evidence type="ECO:0000305" key="2"/>
<reference key="1">
    <citation type="journal article" date="2011" name="J. Bacteriol.">
        <title>Comparative genomics of 28 Salmonella enterica isolates: evidence for CRISPR-mediated adaptive sublineage evolution.</title>
        <authorList>
            <person name="Fricke W.F."/>
            <person name="Mammel M.K."/>
            <person name="McDermott P.F."/>
            <person name="Tartera C."/>
            <person name="White D.G."/>
            <person name="Leclerc J.E."/>
            <person name="Ravel J."/>
            <person name="Cebula T.A."/>
        </authorList>
    </citation>
    <scope>NUCLEOTIDE SEQUENCE [LARGE SCALE GENOMIC DNA]</scope>
    <source>
        <strain>SL476</strain>
    </source>
</reference>
<name>RL36_SALHS</name>
<sequence>MQVLNSLRNAKQRHPDCQIVKRKGRLYVICKTNPRFKAVQGRKKRR</sequence>
<gene>
    <name evidence="1" type="primary">rpmJ</name>
    <name type="ordered locus">SeHA_C0573</name>
</gene>
<feature type="chain" id="PRO_1000101067" description="Large ribosomal subunit protein bL36">
    <location>
        <begin position="1"/>
        <end position="46"/>
    </location>
</feature>
<keyword id="KW-0687">Ribonucleoprotein</keyword>
<keyword id="KW-0689">Ribosomal protein</keyword>
<accession>B4T9G4</accession>
<proteinExistence type="inferred from homology"/>
<dbReference type="EMBL" id="CP001120">
    <property type="protein sequence ID" value="ACF67846.1"/>
    <property type="molecule type" value="Genomic_DNA"/>
</dbReference>
<dbReference type="SMR" id="B4T9G4"/>
<dbReference type="KEGG" id="seh:SeHA_C0573"/>
<dbReference type="HOGENOM" id="CLU_135723_3_1_6"/>
<dbReference type="Proteomes" id="UP000001866">
    <property type="component" value="Chromosome"/>
</dbReference>
<dbReference type="GO" id="GO:1990904">
    <property type="term" value="C:ribonucleoprotein complex"/>
    <property type="evidence" value="ECO:0007669"/>
    <property type="project" value="UniProtKB-KW"/>
</dbReference>
<dbReference type="GO" id="GO:0005840">
    <property type="term" value="C:ribosome"/>
    <property type="evidence" value="ECO:0007669"/>
    <property type="project" value="UniProtKB-KW"/>
</dbReference>
<dbReference type="GO" id="GO:0003735">
    <property type="term" value="F:structural constituent of ribosome"/>
    <property type="evidence" value="ECO:0007669"/>
    <property type="project" value="InterPro"/>
</dbReference>
<dbReference type="GO" id="GO:0006412">
    <property type="term" value="P:translation"/>
    <property type="evidence" value="ECO:0007669"/>
    <property type="project" value="UniProtKB-UniRule"/>
</dbReference>
<dbReference type="HAMAP" id="MF_00251">
    <property type="entry name" value="Ribosomal_bL36"/>
    <property type="match status" value="1"/>
</dbReference>
<dbReference type="InterPro" id="IPR000473">
    <property type="entry name" value="Ribosomal_bL36"/>
</dbReference>
<dbReference type="InterPro" id="IPR035977">
    <property type="entry name" value="Ribosomal_bL36_sp"/>
</dbReference>
<dbReference type="InterPro" id="IPR047621">
    <property type="entry name" value="Ribosomal_L36_bact"/>
</dbReference>
<dbReference type="NCBIfam" id="NF002021">
    <property type="entry name" value="PRK00831.1"/>
    <property type="match status" value="1"/>
</dbReference>
<dbReference type="NCBIfam" id="TIGR01022">
    <property type="entry name" value="rpmJ_bact"/>
    <property type="match status" value="1"/>
</dbReference>
<dbReference type="PANTHER" id="PTHR47781">
    <property type="entry name" value="50S RIBOSOMAL PROTEIN L36 2"/>
    <property type="match status" value="1"/>
</dbReference>
<dbReference type="PANTHER" id="PTHR47781:SF1">
    <property type="entry name" value="LARGE RIBOSOMAL SUBUNIT PROTEIN BL36B"/>
    <property type="match status" value="1"/>
</dbReference>
<dbReference type="Pfam" id="PF00444">
    <property type="entry name" value="Ribosomal_L36"/>
    <property type="match status" value="1"/>
</dbReference>
<dbReference type="SUPFAM" id="SSF57840">
    <property type="entry name" value="Ribosomal protein L36"/>
    <property type="match status" value="1"/>
</dbReference>
<dbReference type="PROSITE" id="PS00828">
    <property type="entry name" value="RIBOSOMAL_L36"/>
    <property type="match status" value="1"/>
</dbReference>
<protein>
    <recommendedName>
        <fullName evidence="1">Large ribosomal subunit protein bL36</fullName>
    </recommendedName>
    <alternativeName>
        <fullName evidence="2">50S ribosomal protein L36</fullName>
    </alternativeName>
</protein>